<accession>Q6NJ84</accession>
<sequence>MALKITQHKGLVGANPKQRKNMAALGLKHINHSVVHQDTPVVRGMVNVVRHMVSVEEVAGE</sequence>
<gene>
    <name evidence="1" type="primary">rpmD</name>
    <name type="ordered locus">DIP0528</name>
</gene>
<dbReference type="EMBL" id="BX248355">
    <property type="protein sequence ID" value="CAE49039.1"/>
    <property type="molecule type" value="Genomic_DNA"/>
</dbReference>
<dbReference type="RefSeq" id="WP_004566826.1">
    <property type="nucleotide sequence ID" value="NC_002935.2"/>
</dbReference>
<dbReference type="SMR" id="Q6NJ84"/>
<dbReference type="STRING" id="257309.DIP0528"/>
<dbReference type="GeneID" id="97331134"/>
<dbReference type="KEGG" id="cdi:DIP0528"/>
<dbReference type="HOGENOM" id="CLU_131047_2_0_11"/>
<dbReference type="Proteomes" id="UP000002198">
    <property type="component" value="Chromosome"/>
</dbReference>
<dbReference type="GO" id="GO:0022625">
    <property type="term" value="C:cytosolic large ribosomal subunit"/>
    <property type="evidence" value="ECO:0007669"/>
    <property type="project" value="TreeGrafter"/>
</dbReference>
<dbReference type="GO" id="GO:0003735">
    <property type="term" value="F:structural constituent of ribosome"/>
    <property type="evidence" value="ECO:0007669"/>
    <property type="project" value="InterPro"/>
</dbReference>
<dbReference type="GO" id="GO:0006412">
    <property type="term" value="P:translation"/>
    <property type="evidence" value="ECO:0007669"/>
    <property type="project" value="UniProtKB-UniRule"/>
</dbReference>
<dbReference type="CDD" id="cd01658">
    <property type="entry name" value="Ribosomal_L30"/>
    <property type="match status" value="1"/>
</dbReference>
<dbReference type="Gene3D" id="3.30.1390.20">
    <property type="entry name" value="Ribosomal protein L30, ferredoxin-like fold domain"/>
    <property type="match status" value="1"/>
</dbReference>
<dbReference type="HAMAP" id="MF_01371_B">
    <property type="entry name" value="Ribosomal_uL30_B"/>
    <property type="match status" value="1"/>
</dbReference>
<dbReference type="InterPro" id="IPR036919">
    <property type="entry name" value="Ribo_uL30_ferredoxin-like_sf"/>
</dbReference>
<dbReference type="InterPro" id="IPR005996">
    <property type="entry name" value="Ribosomal_uL30_bac-type"/>
</dbReference>
<dbReference type="InterPro" id="IPR016082">
    <property type="entry name" value="Ribosomal_uL30_ferredoxin-like"/>
</dbReference>
<dbReference type="NCBIfam" id="TIGR01308">
    <property type="entry name" value="rpmD_bact"/>
    <property type="match status" value="1"/>
</dbReference>
<dbReference type="PANTHER" id="PTHR15892:SF2">
    <property type="entry name" value="LARGE RIBOSOMAL SUBUNIT PROTEIN UL30M"/>
    <property type="match status" value="1"/>
</dbReference>
<dbReference type="PANTHER" id="PTHR15892">
    <property type="entry name" value="MITOCHONDRIAL RIBOSOMAL PROTEIN L30"/>
    <property type="match status" value="1"/>
</dbReference>
<dbReference type="Pfam" id="PF00327">
    <property type="entry name" value="Ribosomal_L30"/>
    <property type="match status" value="1"/>
</dbReference>
<dbReference type="PIRSF" id="PIRSF002211">
    <property type="entry name" value="Ribosomal_L30_bac-type"/>
    <property type="match status" value="1"/>
</dbReference>
<dbReference type="SUPFAM" id="SSF55129">
    <property type="entry name" value="Ribosomal protein L30p/L7e"/>
    <property type="match status" value="1"/>
</dbReference>
<protein>
    <recommendedName>
        <fullName evidence="1">Large ribosomal subunit protein uL30</fullName>
    </recommendedName>
    <alternativeName>
        <fullName evidence="2">50S ribosomal protein L30</fullName>
    </alternativeName>
</protein>
<evidence type="ECO:0000255" key="1">
    <source>
        <dbReference type="HAMAP-Rule" id="MF_01371"/>
    </source>
</evidence>
<evidence type="ECO:0000305" key="2"/>
<keyword id="KW-1185">Reference proteome</keyword>
<keyword id="KW-0687">Ribonucleoprotein</keyword>
<keyword id="KW-0689">Ribosomal protein</keyword>
<proteinExistence type="inferred from homology"/>
<name>RL30_CORDI</name>
<reference key="1">
    <citation type="journal article" date="2003" name="Nucleic Acids Res.">
        <title>The complete genome sequence and analysis of Corynebacterium diphtheriae NCTC13129.</title>
        <authorList>
            <person name="Cerdeno-Tarraga A.-M."/>
            <person name="Efstratiou A."/>
            <person name="Dover L.G."/>
            <person name="Holden M.T.G."/>
            <person name="Pallen M.J."/>
            <person name="Bentley S.D."/>
            <person name="Besra G.S."/>
            <person name="Churcher C.M."/>
            <person name="James K.D."/>
            <person name="De Zoysa A."/>
            <person name="Chillingworth T."/>
            <person name="Cronin A."/>
            <person name="Dowd L."/>
            <person name="Feltwell T."/>
            <person name="Hamlin N."/>
            <person name="Holroyd S."/>
            <person name="Jagels K."/>
            <person name="Moule S."/>
            <person name="Quail M.A."/>
            <person name="Rabbinowitsch E."/>
            <person name="Rutherford K.M."/>
            <person name="Thomson N.R."/>
            <person name="Unwin L."/>
            <person name="Whitehead S."/>
            <person name="Barrell B.G."/>
            <person name="Parkhill J."/>
        </authorList>
    </citation>
    <scope>NUCLEOTIDE SEQUENCE [LARGE SCALE GENOMIC DNA]</scope>
    <source>
        <strain>ATCC 700971 / NCTC 13129 / Biotype gravis</strain>
    </source>
</reference>
<feature type="chain" id="PRO_0000273773" description="Large ribosomal subunit protein uL30">
    <location>
        <begin position="1"/>
        <end position="61"/>
    </location>
</feature>
<organism>
    <name type="scientific">Corynebacterium diphtheriae (strain ATCC 700971 / NCTC 13129 / Biotype gravis)</name>
    <dbReference type="NCBI Taxonomy" id="257309"/>
    <lineage>
        <taxon>Bacteria</taxon>
        <taxon>Bacillati</taxon>
        <taxon>Actinomycetota</taxon>
        <taxon>Actinomycetes</taxon>
        <taxon>Mycobacteriales</taxon>
        <taxon>Corynebacteriaceae</taxon>
        <taxon>Corynebacterium</taxon>
    </lineage>
</organism>
<comment type="subunit">
    <text evidence="1">Part of the 50S ribosomal subunit.</text>
</comment>
<comment type="similarity">
    <text evidence="1">Belongs to the universal ribosomal protein uL30 family.</text>
</comment>